<accession>B1KSP3</accession>
<keyword id="KW-0067">ATP-binding</keyword>
<keyword id="KW-0414">Isoprene biosynthesis</keyword>
<keyword id="KW-0418">Kinase</keyword>
<keyword id="KW-0547">Nucleotide-binding</keyword>
<keyword id="KW-0808">Transferase</keyword>
<name>ISPE_CLOBM</name>
<protein>
    <recommendedName>
        <fullName evidence="1">4-diphosphocytidyl-2-C-methyl-D-erythritol kinase</fullName>
        <shortName evidence="1">CMK</shortName>
        <ecNumber evidence="1">2.7.1.148</ecNumber>
    </recommendedName>
    <alternativeName>
        <fullName evidence="1">4-(cytidine-5'-diphospho)-2-C-methyl-D-erythritol kinase</fullName>
    </alternativeName>
</protein>
<reference key="1">
    <citation type="journal article" date="2007" name="PLoS ONE">
        <title>Analysis of the neurotoxin complex genes in Clostridium botulinum A1-A4 and B1 strains: BoNT/A3, /Ba4 and /B1 clusters are located within plasmids.</title>
        <authorList>
            <person name="Smith T.J."/>
            <person name="Hill K.K."/>
            <person name="Foley B.T."/>
            <person name="Detter J.C."/>
            <person name="Munk A.C."/>
            <person name="Bruce D.C."/>
            <person name="Doggett N.A."/>
            <person name="Smith L.A."/>
            <person name="Marks J.D."/>
            <person name="Xie G."/>
            <person name="Brettin T.S."/>
        </authorList>
    </citation>
    <scope>NUCLEOTIDE SEQUENCE [LARGE SCALE GENOMIC DNA]</scope>
    <source>
        <strain>Loch Maree / Type A3</strain>
    </source>
</reference>
<sequence>MLSKAHAKVNLSLDVIGKRKDGYHLLKMLMQTIDLYDLIQIKKIKKGIIIDCDREYIPKDRRNLAYKAAELFLDRYNIDSGVRIDITKNIPVAAGLAGGSTDAATVLKIMRDIFRSDISNKELKEIALDIGADVPFCIEGGTALCEGIGEKITPIKNFKNQILVLVKPNFGLSTKDVYNNLKVEKIYIHPNTTKLIQSIEEDNLKSVARNMRNVLENVTLRKYKTLNSIKSNFIELGALGSMMSGSGPSVFGLFDDMLKAQICYDNMKEKYKEVFITRTI</sequence>
<dbReference type="EC" id="2.7.1.148" evidence="1"/>
<dbReference type="EMBL" id="CP000962">
    <property type="protein sequence ID" value="ACA53780.1"/>
    <property type="molecule type" value="Genomic_DNA"/>
</dbReference>
<dbReference type="RefSeq" id="WP_012341966.1">
    <property type="nucleotide sequence ID" value="NC_010520.1"/>
</dbReference>
<dbReference type="SMR" id="B1KSP3"/>
<dbReference type="KEGG" id="cbl:CLK_3296"/>
<dbReference type="HOGENOM" id="CLU_053057_1_1_9"/>
<dbReference type="UniPathway" id="UPA00056">
    <property type="reaction ID" value="UER00094"/>
</dbReference>
<dbReference type="GO" id="GO:0050515">
    <property type="term" value="F:4-(cytidine 5'-diphospho)-2-C-methyl-D-erythritol kinase activity"/>
    <property type="evidence" value="ECO:0007669"/>
    <property type="project" value="UniProtKB-UniRule"/>
</dbReference>
<dbReference type="GO" id="GO:0005524">
    <property type="term" value="F:ATP binding"/>
    <property type="evidence" value="ECO:0007669"/>
    <property type="project" value="UniProtKB-UniRule"/>
</dbReference>
<dbReference type="GO" id="GO:0019288">
    <property type="term" value="P:isopentenyl diphosphate biosynthetic process, methylerythritol 4-phosphate pathway"/>
    <property type="evidence" value="ECO:0007669"/>
    <property type="project" value="UniProtKB-UniRule"/>
</dbReference>
<dbReference type="GO" id="GO:0016114">
    <property type="term" value="P:terpenoid biosynthetic process"/>
    <property type="evidence" value="ECO:0007669"/>
    <property type="project" value="InterPro"/>
</dbReference>
<dbReference type="FunFam" id="3.30.230.10:FF:000029">
    <property type="entry name" value="4-diphosphocytidyl-2-C-methyl-D-erythritol kinase"/>
    <property type="match status" value="1"/>
</dbReference>
<dbReference type="Gene3D" id="3.30.230.10">
    <property type="match status" value="1"/>
</dbReference>
<dbReference type="Gene3D" id="3.30.70.890">
    <property type="entry name" value="GHMP kinase, C-terminal domain"/>
    <property type="match status" value="1"/>
</dbReference>
<dbReference type="HAMAP" id="MF_00061">
    <property type="entry name" value="IspE"/>
    <property type="match status" value="1"/>
</dbReference>
<dbReference type="InterPro" id="IPR013750">
    <property type="entry name" value="GHMP_kinase_C_dom"/>
</dbReference>
<dbReference type="InterPro" id="IPR036554">
    <property type="entry name" value="GHMP_kinase_C_sf"/>
</dbReference>
<dbReference type="InterPro" id="IPR006204">
    <property type="entry name" value="GHMP_kinase_N_dom"/>
</dbReference>
<dbReference type="InterPro" id="IPR004424">
    <property type="entry name" value="IspE"/>
</dbReference>
<dbReference type="InterPro" id="IPR020568">
    <property type="entry name" value="Ribosomal_Su5_D2-typ_SF"/>
</dbReference>
<dbReference type="InterPro" id="IPR014721">
    <property type="entry name" value="Ribsml_uS5_D2-typ_fold_subgr"/>
</dbReference>
<dbReference type="NCBIfam" id="TIGR00154">
    <property type="entry name" value="ispE"/>
    <property type="match status" value="1"/>
</dbReference>
<dbReference type="PANTHER" id="PTHR43527">
    <property type="entry name" value="4-DIPHOSPHOCYTIDYL-2-C-METHYL-D-ERYTHRITOL KINASE, CHLOROPLASTIC"/>
    <property type="match status" value="1"/>
</dbReference>
<dbReference type="PANTHER" id="PTHR43527:SF2">
    <property type="entry name" value="4-DIPHOSPHOCYTIDYL-2-C-METHYL-D-ERYTHRITOL KINASE, CHLOROPLASTIC"/>
    <property type="match status" value="1"/>
</dbReference>
<dbReference type="Pfam" id="PF08544">
    <property type="entry name" value="GHMP_kinases_C"/>
    <property type="match status" value="1"/>
</dbReference>
<dbReference type="Pfam" id="PF00288">
    <property type="entry name" value="GHMP_kinases_N"/>
    <property type="match status" value="1"/>
</dbReference>
<dbReference type="PIRSF" id="PIRSF010376">
    <property type="entry name" value="IspE"/>
    <property type="match status" value="1"/>
</dbReference>
<dbReference type="SUPFAM" id="SSF55060">
    <property type="entry name" value="GHMP Kinase, C-terminal domain"/>
    <property type="match status" value="1"/>
</dbReference>
<dbReference type="SUPFAM" id="SSF54211">
    <property type="entry name" value="Ribosomal protein S5 domain 2-like"/>
    <property type="match status" value="1"/>
</dbReference>
<organism>
    <name type="scientific">Clostridium botulinum (strain Loch Maree / Type A3)</name>
    <dbReference type="NCBI Taxonomy" id="498214"/>
    <lineage>
        <taxon>Bacteria</taxon>
        <taxon>Bacillati</taxon>
        <taxon>Bacillota</taxon>
        <taxon>Clostridia</taxon>
        <taxon>Eubacteriales</taxon>
        <taxon>Clostridiaceae</taxon>
        <taxon>Clostridium</taxon>
    </lineage>
</organism>
<feature type="chain" id="PRO_1000092079" description="4-diphosphocytidyl-2-C-methyl-D-erythritol kinase">
    <location>
        <begin position="1"/>
        <end position="280"/>
    </location>
</feature>
<feature type="active site" evidence="1">
    <location>
        <position position="8"/>
    </location>
</feature>
<feature type="active site" evidence="1">
    <location>
        <position position="133"/>
    </location>
</feature>
<feature type="binding site" evidence="1">
    <location>
        <begin position="91"/>
        <end position="101"/>
    </location>
    <ligand>
        <name>ATP</name>
        <dbReference type="ChEBI" id="CHEBI:30616"/>
    </ligand>
</feature>
<gene>
    <name evidence="1" type="primary">ispE</name>
    <name type="ordered locus">CLK_3296</name>
</gene>
<proteinExistence type="inferred from homology"/>
<evidence type="ECO:0000255" key="1">
    <source>
        <dbReference type="HAMAP-Rule" id="MF_00061"/>
    </source>
</evidence>
<comment type="function">
    <text evidence="1">Catalyzes the phosphorylation of the position 2 hydroxy group of 4-diphosphocytidyl-2C-methyl-D-erythritol.</text>
</comment>
<comment type="catalytic activity">
    <reaction evidence="1">
        <text>4-CDP-2-C-methyl-D-erythritol + ATP = 4-CDP-2-C-methyl-D-erythritol 2-phosphate + ADP + H(+)</text>
        <dbReference type="Rhea" id="RHEA:18437"/>
        <dbReference type="ChEBI" id="CHEBI:15378"/>
        <dbReference type="ChEBI" id="CHEBI:30616"/>
        <dbReference type="ChEBI" id="CHEBI:57823"/>
        <dbReference type="ChEBI" id="CHEBI:57919"/>
        <dbReference type="ChEBI" id="CHEBI:456216"/>
        <dbReference type="EC" id="2.7.1.148"/>
    </reaction>
</comment>
<comment type="pathway">
    <text evidence="1">Isoprenoid biosynthesis; isopentenyl diphosphate biosynthesis via DXP pathway; isopentenyl diphosphate from 1-deoxy-D-xylulose 5-phosphate: step 3/6.</text>
</comment>
<comment type="similarity">
    <text evidence="1">Belongs to the GHMP kinase family. IspE subfamily.</text>
</comment>